<comment type="function">
    <text evidence="4 5 6">Major role in the synthesis of nucleoside triphosphates other than ATP. The ATP gamma phosphate is transferred to the NDP beta phosphate via a ping-pong mechanism, using a phosphorylated active-site intermediate.</text>
</comment>
<comment type="catalytic activity">
    <reaction evidence="2">
        <text>a 2'-deoxyribonucleoside 5'-diphosphate + ATP = a 2'-deoxyribonucleoside 5'-triphosphate + ADP</text>
        <dbReference type="Rhea" id="RHEA:44640"/>
        <dbReference type="ChEBI" id="CHEBI:30616"/>
        <dbReference type="ChEBI" id="CHEBI:61560"/>
        <dbReference type="ChEBI" id="CHEBI:73316"/>
        <dbReference type="ChEBI" id="CHEBI:456216"/>
        <dbReference type="EC" id="2.7.4.6"/>
    </reaction>
</comment>
<comment type="catalytic activity">
    <reaction evidence="2">
        <text>a ribonucleoside 5'-diphosphate + ATP = a ribonucleoside 5'-triphosphate + ADP</text>
        <dbReference type="Rhea" id="RHEA:18113"/>
        <dbReference type="ChEBI" id="CHEBI:30616"/>
        <dbReference type="ChEBI" id="CHEBI:57930"/>
        <dbReference type="ChEBI" id="CHEBI:61557"/>
        <dbReference type="ChEBI" id="CHEBI:456216"/>
        <dbReference type="EC" id="2.7.4.6"/>
    </reaction>
</comment>
<comment type="cofactor">
    <cofactor evidence="7">
        <name>Mg(2+)</name>
        <dbReference type="ChEBI" id="CHEBI:18420"/>
    </cofactor>
</comment>
<comment type="subunit">
    <text evidence="2">Homohexamer.</text>
</comment>
<comment type="subcellular location">
    <subcellularLocation>
        <location evidence="4">Cytoplasm</location>
    </subcellularLocation>
    <subcellularLocation>
        <location evidence="4">Cytoplasm</location>
        <location evidence="4">Cytoskeleton</location>
    </subcellularLocation>
    <text>Microtubule-associated.</text>
</comment>
<comment type="mass spectrometry" mass="17082.3" error="0.6" method="Electrospray" evidence="1">
    <text>Acetylated.</text>
</comment>
<comment type="miscellaneous">
    <text>Mutations cause abnormal tissue morphology and necrosis and widespread aberrant differentiation.</text>
</comment>
<comment type="similarity">
    <text evidence="8">Belongs to the NDK family.</text>
</comment>
<comment type="sequence caution" evidence="8">
    <conflict type="erroneous initiation">
        <sequence resource="EMBL-CDS" id="AAF57188"/>
    </conflict>
    <text>Extended N-terminus.</text>
</comment>
<feature type="initiator methionine" description="Removed" evidence="1">
    <location>
        <position position="1"/>
    </location>
</feature>
<feature type="chain" id="PRO_0000137108" description="Nucleoside diphosphate kinase">
    <location>
        <begin position="2"/>
        <end position="153"/>
    </location>
</feature>
<feature type="active site" description="Pros-phosphohistidine intermediate">
    <location>
        <position position="119"/>
    </location>
</feature>
<feature type="binding site">
    <location>
        <position position="13"/>
    </location>
    <ligand>
        <name>ATP</name>
        <dbReference type="ChEBI" id="CHEBI:30616"/>
    </ligand>
</feature>
<feature type="binding site">
    <location>
        <position position="61"/>
    </location>
    <ligand>
        <name>ATP</name>
        <dbReference type="ChEBI" id="CHEBI:30616"/>
    </ligand>
</feature>
<feature type="binding site">
    <location>
        <position position="89"/>
    </location>
    <ligand>
        <name>ATP</name>
        <dbReference type="ChEBI" id="CHEBI:30616"/>
    </ligand>
</feature>
<feature type="binding site">
    <location>
        <position position="95"/>
    </location>
    <ligand>
        <name>ATP</name>
        <dbReference type="ChEBI" id="CHEBI:30616"/>
    </ligand>
</feature>
<feature type="binding site">
    <location>
        <position position="106"/>
    </location>
    <ligand>
        <name>ATP</name>
        <dbReference type="ChEBI" id="CHEBI:30616"/>
    </ligand>
</feature>
<feature type="binding site">
    <location>
        <position position="116"/>
    </location>
    <ligand>
        <name>ATP</name>
        <dbReference type="ChEBI" id="CHEBI:30616"/>
    </ligand>
</feature>
<feature type="modified residue" description="N-acetylalanine" evidence="1">
    <location>
        <position position="2"/>
    </location>
</feature>
<feature type="modified residue" description="Phosphoserine" evidence="3">
    <location>
        <position position="126"/>
    </location>
</feature>
<feature type="mutagenesis site" description="In KRm5; lethal due to loss of phosphorylated active site intermediate; when associated with S-97." evidence="6">
    <original>D</original>
    <variation>N</variation>
    <location>
        <position position="15"/>
    </location>
</feature>
<feature type="mutagenesis site" description="In KRn3; lethal due to loss of phosphorylated active site intermediate; when associated with S-97." evidence="6">
    <original>R</original>
    <variation>C</variation>
    <location>
        <position position="89"/>
    </location>
</feature>
<feature type="mutagenesis site" description="Killer of prune mutation. Conditionally dominant lethal mutation in individuals with a null mutation in the prune gene." evidence="2">
    <original>P</original>
    <variation>S</variation>
    <location>
        <position position="97"/>
    </location>
</feature>
<feature type="mutagenesis site" description="In KRm7; lethal due to loss of phosphorylated active site intermediate; when associated with S-97." evidence="6">
    <original>R</original>
    <variation>C</variation>
    <location>
        <position position="106"/>
    </location>
</feature>
<feature type="mutagenesis site" description="In KRm12; lethal due to lower enzyme activity; when associated with S-97." evidence="6">
    <original>D</original>
    <variation>N</variation>
    <location>
        <position position="122"/>
    </location>
</feature>
<feature type="mutagenesis site" description="In KRm9; lower enzyme activity; when associated with S-97.">
    <original>A</original>
    <variation>T</variation>
    <location>
        <position position="127"/>
    </location>
</feature>
<feature type="mutagenesis site" description="In KRm4; lethal due to loss of catalytic activity; when associated with S-97." evidence="6">
    <original>E</original>
    <variation>K</variation>
    <location>
        <position position="130"/>
    </location>
</feature>
<feature type="helix" evidence="9">
    <location>
        <begin position="3"/>
        <end position="5"/>
    </location>
</feature>
<feature type="strand" evidence="9">
    <location>
        <begin position="7"/>
        <end position="12"/>
    </location>
</feature>
<feature type="helix" evidence="9">
    <location>
        <begin position="14"/>
        <end position="18"/>
    </location>
</feature>
<feature type="helix" evidence="9">
    <location>
        <begin position="22"/>
        <end position="32"/>
    </location>
</feature>
<feature type="strand" evidence="9">
    <location>
        <begin position="35"/>
        <end position="39"/>
    </location>
</feature>
<feature type="helix" evidence="9">
    <location>
        <begin position="46"/>
        <end position="52"/>
    </location>
</feature>
<feature type="helix" evidence="9">
    <location>
        <begin position="54"/>
        <end position="56"/>
    </location>
</feature>
<feature type="helix" evidence="9">
    <location>
        <begin position="62"/>
        <end position="69"/>
    </location>
</feature>
<feature type="strand" evidence="9">
    <location>
        <begin position="74"/>
        <end position="81"/>
    </location>
</feature>
<feature type="helix" evidence="9">
    <location>
        <begin position="84"/>
        <end position="92"/>
    </location>
</feature>
<feature type="helix" evidence="9">
    <location>
        <begin position="97"/>
        <end position="99"/>
    </location>
</feature>
<feature type="helix" evidence="9">
    <location>
        <begin position="105"/>
        <end position="109"/>
    </location>
</feature>
<feature type="helix" evidence="9">
    <location>
        <begin position="113"/>
        <end position="115"/>
    </location>
</feature>
<feature type="strand" evidence="9">
    <location>
        <begin position="118"/>
        <end position="120"/>
    </location>
</feature>
<feature type="helix" evidence="9">
    <location>
        <begin position="124"/>
        <end position="134"/>
    </location>
</feature>
<feature type="helix" evidence="9">
    <location>
        <begin position="137"/>
        <end position="139"/>
    </location>
</feature>
<feature type="helix" evidence="9">
    <location>
        <begin position="148"/>
        <end position="151"/>
    </location>
</feature>
<organism>
    <name type="scientific">Drosophila melanogaster</name>
    <name type="common">Fruit fly</name>
    <dbReference type="NCBI Taxonomy" id="7227"/>
    <lineage>
        <taxon>Eukaryota</taxon>
        <taxon>Metazoa</taxon>
        <taxon>Ecdysozoa</taxon>
        <taxon>Arthropoda</taxon>
        <taxon>Hexapoda</taxon>
        <taxon>Insecta</taxon>
        <taxon>Pterygota</taxon>
        <taxon>Neoptera</taxon>
        <taxon>Endopterygota</taxon>
        <taxon>Diptera</taxon>
        <taxon>Brachycera</taxon>
        <taxon>Muscomorpha</taxon>
        <taxon>Ephydroidea</taxon>
        <taxon>Drosophilidae</taxon>
        <taxon>Drosophila</taxon>
        <taxon>Sophophora</taxon>
    </lineage>
</organism>
<proteinExistence type="evidence at protein level"/>
<reference key="1">
    <citation type="journal article" date="1988" name="Genes Dev.">
        <title>Analysis of the lethal interaction between the prune and Killer of prune mutations of Drosophila.</title>
        <authorList>
            <person name="Biggs J."/>
            <person name="Tripoulas N."/>
            <person name="Hersperger E."/>
            <person name="Dearolf C."/>
            <person name="Shearn A."/>
        </authorList>
    </citation>
    <scope>NUCLEOTIDE SEQUENCE [MRNA]</scope>
    <scope>FUNCTION</scope>
</reference>
<reference key="2">
    <citation type="journal article" date="2000" name="Science">
        <title>The genome sequence of Drosophila melanogaster.</title>
        <authorList>
            <person name="Adams M.D."/>
            <person name="Celniker S.E."/>
            <person name="Holt R.A."/>
            <person name="Evans C.A."/>
            <person name="Gocayne J.D."/>
            <person name="Amanatides P.G."/>
            <person name="Scherer S.E."/>
            <person name="Li P.W."/>
            <person name="Hoskins R.A."/>
            <person name="Galle R.F."/>
            <person name="George R.A."/>
            <person name="Lewis S.E."/>
            <person name="Richards S."/>
            <person name="Ashburner M."/>
            <person name="Henderson S.N."/>
            <person name="Sutton G.G."/>
            <person name="Wortman J.R."/>
            <person name="Yandell M.D."/>
            <person name="Zhang Q."/>
            <person name="Chen L.X."/>
            <person name="Brandon R.C."/>
            <person name="Rogers Y.-H.C."/>
            <person name="Blazej R.G."/>
            <person name="Champe M."/>
            <person name="Pfeiffer B.D."/>
            <person name="Wan K.H."/>
            <person name="Doyle C."/>
            <person name="Baxter E.G."/>
            <person name="Helt G."/>
            <person name="Nelson C.R."/>
            <person name="Miklos G.L.G."/>
            <person name="Abril J.F."/>
            <person name="Agbayani A."/>
            <person name="An H.-J."/>
            <person name="Andrews-Pfannkoch C."/>
            <person name="Baldwin D."/>
            <person name="Ballew R.M."/>
            <person name="Basu A."/>
            <person name="Baxendale J."/>
            <person name="Bayraktaroglu L."/>
            <person name="Beasley E.M."/>
            <person name="Beeson K.Y."/>
            <person name="Benos P.V."/>
            <person name="Berman B.P."/>
            <person name="Bhandari D."/>
            <person name="Bolshakov S."/>
            <person name="Borkova D."/>
            <person name="Botchan M.R."/>
            <person name="Bouck J."/>
            <person name="Brokstein P."/>
            <person name="Brottier P."/>
            <person name="Burtis K.C."/>
            <person name="Busam D.A."/>
            <person name="Butler H."/>
            <person name="Cadieu E."/>
            <person name="Center A."/>
            <person name="Chandra I."/>
            <person name="Cherry J.M."/>
            <person name="Cawley S."/>
            <person name="Dahlke C."/>
            <person name="Davenport L.B."/>
            <person name="Davies P."/>
            <person name="de Pablos B."/>
            <person name="Delcher A."/>
            <person name="Deng Z."/>
            <person name="Mays A.D."/>
            <person name="Dew I."/>
            <person name="Dietz S.M."/>
            <person name="Dodson K."/>
            <person name="Doup L.E."/>
            <person name="Downes M."/>
            <person name="Dugan-Rocha S."/>
            <person name="Dunkov B.C."/>
            <person name="Dunn P."/>
            <person name="Durbin K.J."/>
            <person name="Evangelista C.C."/>
            <person name="Ferraz C."/>
            <person name="Ferriera S."/>
            <person name="Fleischmann W."/>
            <person name="Fosler C."/>
            <person name="Gabrielian A.E."/>
            <person name="Garg N.S."/>
            <person name="Gelbart W.M."/>
            <person name="Glasser K."/>
            <person name="Glodek A."/>
            <person name="Gong F."/>
            <person name="Gorrell J.H."/>
            <person name="Gu Z."/>
            <person name="Guan P."/>
            <person name="Harris M."/>
            <person name="Harris N.L."/>
            <person name="Harvey D.A."/>
            <person name="Heiman T.J."/>
            <person name="Hernandez J.R."/>
            <person name="Houck J."/>
            <person name="Hostin D."/>
            <person name="Houston K.A."/>
            <person name="Howland T.J."/>
            <person name="Wei M.-H."/>
            <person name="Ibegwam C."/>
            <person name="Jalali M."/>
            <person name="Kalush F."/>
            <person name="Karpen G.H."/>
            <person name="Ke Z."/>
            <person name="Kennison J.A."/>
            <person name="Ketchum K.A."/>
            <person name="Kimmel B.E."/>
            <person name="Kodira C.D."/>
            <person name="Kraft C.L."/>
            <person name="Kravitz S."/>
            <person name="Kulp D."/>
            <person name="Lai Z."/>
            <person name="Lasko P."/>
            <person name="Lei Y."/>
            <person name="Levitsky A.A."/>
            <person name="Li J.H."/>
            <person name="Li Z."/>
            <person name="Liang Y."/>
            <person name="Lin X."/>
            <person name="Liu X."/>
            <person name="Mattei B."/>
            <person name="McIntosh T.C."/>
            <person name="McLeod M.P."/>
            <person name="McPherson D."/>
            <person name="Merkulov G."/>
            <person name="Milshina N.V."/>
            <person name="Mobarry C."/>
            <person name="Morris J."/>
            <person name="Moshrefi A."/>
            <person name="Mount S.M."/>
            <person name="Moy M."/>
            <person name="Murphy B."/>
            <person name="Murphy L."/>
            <person name="Muzny D.M."/>
            <person name="Nelson D.L."/>
            <person name="Nelson D.R."/>
            <person name="Nelson K.A."/>
            <person name="Nixon K."/>
            <person name="Nusskern D.R."/>
            <person name="Pacleb J.M."/>
            <person name="Palazzolo M."/>
            <person name="Pittman G.S."/>
            <person name="Pan S."/>
            <person name="Pollard J."/>
            <person name="Puri V."/>
            <person name="Reese M.G."/>
            <person name="Reinert K."/>
            <person name="Remington K."/>
            <person name="Saunders R.D.C."/>
            <person name="Scheeler F."/>
            <person name="Shen H."/>
            <person name="Shue B.C."/>
            <person name="Siden-Kiamos I."/>
            <person name="Simpson M."/>
            <person name="Skupski M.P."/>
            <person name="Smith T.J."/>
            <person name="Spier E."/>
            <person name="Spradling A.C."/>
            <person name="Stapleton M."/>
            <person name="Strong R."/>
            <person name="Sun E."/>
            <person name="Svirskas R."/>
            <person name="Tector C."/>
            <person name="Turner R."/>
            <person name="Venter E."/>
            <person name="Wang A.H."/>
            <person name="Wang X."/>
            <person name="Wang Z.-Y."/>
            <person name="Wassarman D.A."/>
            <person name="Weinstock G.M."/>
            <person name="Weissenbach J."/>
            <person name="Williams S.M."/>
            <person name="Woodage T."/>
            <person name="Worley K.C."/>
            <person name="Wu D."/>
            <person name="Yang S."/>
            <person name="Yao Q.A."/>
            <person name="Ye J."/>
            <person name="Yeh R.-F."/>
            <person name="Zaveri J.S."/>
            <person name="Zhan M."/>
            <person name="Zhang G."/>
            <person name="Zhao Q."/>
            <person name="Zheng L."/>
            <person name="Zheng X.H."/>
            <person name="Zhong F.N."/>
            <person name="Zhong W."/>
            <person name="Zhou X."/>
            <person name="Zhu S.C."/>
            <person name="Zhu X."/>
            <person name="Smith H.O."/>
            <person name="Gibbs R.A."/>
            <person name="Myers E.W."/>
            <person name="Rubin G.M."/>
            <person name="Venter J.C."/>
        </authorList>
    </citation>
    <scope>NUCLEOTIDE SEQUENCE [LARGE SCALE GENOMIC DNA]</scope>
    <source>
        <strain>Berkeley</strain>
    </source>
</reference>
<reference key="3">
    <citation type="journal article" date="2002" name="Genome Biol.">
        <title>Annotation of the Drosophila melanogaster euchromatic genome: a systematic review.</title>
        <authorList>
            <person name="Misra S."/>
            <person name="Crosby M.A."/>
            <person name="Mungall C.J."/>
            <person name="Matthews B.B."/>
            <person name="Campbell K.S."/>
            <person name="Hradecky P."/>
            <person name="Huang Y."/>
            <person name="Kaminker J.S."/>
            <person name="Millburn G.H."/>
            <person name="Prochnik S.E."/>
            <person name="Smith C.D."/>
            <person name="Tupy J.L."/>
            <person name="Whitfield E.J."/>
            <person name="Bayraktaroglu L."/>
            <person name="Berman B.P."/>
            <person name="Bettencourt B.R."/>
            <person name="Celniker S.E."/>
            <person name="de Grey A.D.N.J."/>
            <person name="Drysdale R.A."/>
            <person name="Harris N.L."/>
            <person name="Richter J."/>
            <person name="Russo S."/>
            <person name="Schroeder A.J."/>
            <person name="Shu S.Q."/>
            <person name="Stapleton M."/>
            <person name="Yamada C."/>
            <person name="Ashburner M."/>
            <person name="Gelbart W.M."/>
            <person name="Rubin G.M."/>
            <person name="Lewis S.E."/>
        </authorList>
    </citation>
    <scope>GENOME REANNOTATION</scope>
    <source>
        <strain>Berkeley</strain>
    </source>
</reference>
<reference key="4">
    <citation type="journal article" date="2002" name="Genome Biol.">
        <title>A Drosophila full-length cDNA resource.</title>
        <authorList>
            <person name="Stapleton M."/>
            <person name="Carlson J.W."/>
            <person name="Brokstein P."/>
            <person name="Yu C."/>
            <person name="Champe M."/>
            <person name="George R.A."/>
            <person name="Guarin H."/>
            <person name="Kronmiller B."/>
            <person name="Pacleb J.M."/>
            <person name="Park S."/>
            <person name="Wan K.H."/>
            <person name="Rubin G.M."/>
            <person name="Celniker S.E."/>
        </authorList>
    </citation>
    <scope>NUCLEOTIDE SEQUENCE [LARGE SCALE MRNA]</scope>
    <source>
        <strain>Berkeley</strain>
        <tissue>Head</tissue>
    </source>
</reference>
<reference key="5">
    <citation type="journal article" date="2002" name="Biochem. Biophys. Res. Commun.">
        <title>Post-translational processing of Drosophila nucleoside diphosphate kinase.</title>
        <authorList>
            <person name="Stenberg L.M."/>
            <person name="Stenflo J."/>
            <person name="Holmgren P."/>
            <person name="Brown M.A."/>
        </authorList>
    </citation>
    <scope>PROTEIN SEQUENCE OF 3-15; 33-35; 47-96 AND 147-153</scope>
    <scope>MASS SPECTROMETRY</scope>
    <scope>BLOCKAGE OF N-TERMINUS</scope>
    <scope>ACETYLATION AT ALA-2</scope>
</reference>
<reference key="6">
    <citation type="journal article" date="1993" name="Exp. Cell Res.">
        <title>Identification of Drosophila wing imaginal disc proteins by two-dimensional gel analysis and microsequencing.</title>
        <authorList>
            <person name="Santaren J.F."/>
            <person name="van Damme J."/>
            <person name="Puype M."/>
            <person name="Vandekerckhove J."/>
            <person name="Garcia-Bellido A."/>
        </authorList>
    </citation>
    <scope>PROTEIN SEQUENCE OF 90-106</scope>
    <source>
        <strain>Vallecas</strain>
        <tissue>Wing imaginal disk</tissue>
    </source>
</reference>
<reference key="7">
    <citation type="journal article" date="1990" name="Cell">
        <title>A Drosophila gene that is homologous to a mammalian gene associated with tumor metastasis codes for a nucleoside diphosphate kinase.</title>
        <authorList>
            <person name="Biggs J."/>
            <person name="Hersperger E."/>
            <person name="Steeg P.S."/>
            <person name="Liotta L.A."/>
            <person name="Shearn A."/>
        </authorList>
    </citation>
    <scope>FUNCTION</scope>
    <scope>SUBCELLULAR LOCATION</scope>
</reference>
<reference key="8">
    <citation type="journal article" date="1992" name="J. Biol. Chem.">
        <title>A Pro/Ser substitution in nucleoside diphosphate kinase of Drosophila melanogaster (mutation killer of prune) affects stability but not catalytic efficiency of the enzyme.</title>
        <authorList>
            <person name="Lascu I."/>
            <person name="Chaffotte A."/>
            <person name="Limbourg-Bouchon B."/>
            <person name="Veron M."/>
        </authorList>
    </citation>
    <scope>CATALYTIC ACTIVITY</scope>
    <scope>SUBUNIT</scope>
    <scope>MUTAGENESIS OF PRO-97</scope>
    <source>
        <strain>Canton-S</strain>
    </source>
</reference>
<reference key="9">
    <citation type="journal article" date="1995" name="J. Biol. Chem.">
        <title>Point mutations in awdKpn which revert the prune/Killer of prune lethal interaction affect conserved residues that are involved in nucleoside diphosphate kinase substrate binding and catalysis.</title>
        <authorList>
            <person name="Timmons L."/>
            <person name="Xu J."/>
            <person name="Hersperger G."/>
            <person name="Deng X.F."/>
            <person name="Shearn A."/>
        </authorList>
    </citation>
    <scope>FUNCTION</scope>
    <scope>MUTAGENESIS OF ASP-15; ARG-89; ARG-106; ASP-122 AND GLU-130</scope>
</reference>
<reference key="10">
    <citation type="journal article" date="2008" name="J. Proteome Res.">
        <title>Phosphoproteome analysis of Drosophila melanogaster embryos.</title>
        <authorList>
            <person name="Zhai B."/>
            <person name="Villen J."/>
            <person name="Beausoleil S.A."/>
            <person name="Mintseris J."/>
            <person name="Gygi S.P."/>
        </authorList>
    </citation>
    <scope>PHOSPHORYLATION [LARGE SCALE ANALYSIS] AT SER-126</scope>
    <scope>IDENTIFICATION BY MASS SPECTROMETRY</scope>
    <source>
        <tissue>Embryo</tissue>
    </source>
</reference>
<reference key="11">
    <citation type="journal article" date="1993" name="Structure">
        <title>Crystal structure of the Awd nucleotide diphosphate kinase from Drosophila.</title>
        <authorList>
            <person name="Chiadmi M."/>
            <person name="Morera S."/>
            <person name="Lascu I."/>
            <person name="Dumas C."/>
            <person name="le Bras G."/>
            <person name="Veron M."/>
            <person name="Janin J."/>
        </authorList>
    </citation>
    <scope>X-RAY CRYSTALLOGRAPHY (2.4 ANGSTROMS)</scope>
</reference>
<reference key="12">
    <citation type="journal article" date="1995" name="Biochemistry">
        <title>Mechanism of phosphate transfer by nucleoside diphosphate kinase: X-ray structures of the phosphohistidine intermediate of the enzymes from Drosophila and Dictyostelium.</title>
        <authorList>
            <person name="Morera S."/>
            <person name="Chiadmi M."/>
            <person name="Lebras G."/>
            <person name="Lascu I."/>
            <person name="Janin J."/>
        </authorList>
    </citation>
    <scope>X-RAY CRYSTALLOGRAPHY (2.2 ANGSTROMS)</scope>
    <scope>COFACTOR</scope>
</reference>
<accession>P08879</accession>
<accession>Q9V9U5</accession>
<evidence type="ECO:0000269" key="1">
    <source>
    </source>
</evidence>
<evidence type="ECO:0000269" key="2">
    <source>
    </source>
</evidence>
<evidence type="ECO:0000269" key="3">
    <source>
    </source>
</evidence>
<evidence type="ECO:0000269" key="4">
    <source>
    </source>
</evidence>
<evidence type="ECO:0000269" key="5">
    <source>
    </source>
</evidence>
<evidence type="ECO:0000269" key="6">
    <source>
    </source>
</evidence>
<evidence type="ECO:0000269" key="7">
    <source>
    </source>
</evidence>
<evidence type="ECO:0000305" key="8"/>
<evidence type="ECO:0007829" key="9">
    <source>
        <dbReference type="PDB" id="3WX8"/>
    </source>
</evidence>
<dbReference type="EC" id="2.7.4.6"/>
<dbReference type="EMBL" id="X13107">
    <property type="protein sequence ID" value="CAA31500.1"/>
    <property type="molecule type" value="mRNA"/>
</dbReference>
<dbReference type="EMBL" id="AE014297">
    <property type="protein sequence ID" value="AAF57188.3"/>
    <property type="status" value="ALT_INIT"/>
    <property type="molecule type" value="Genomic_DNA"/>
</dbReference>
<dbReference type="EMBL" id="AY113576">
    <property type="protein sequence ID" value="AAM29581.1"/>
    <property type="molecule type" value="mRNA"/>
</dbReference>
<dbReference type="PIR" id="S01908">
    <property type="entry name" value="S01908"/>
</dbReference>
<dbReference type="RefSeq" id="NP_001287624.1">
    <property type="nucleotide sequence ID" value="NM_001300695.1"/>
</dbReference>
<dbReference type="RefSeq" id="NP_001287625.1">
    <property type="nucleotide sequence ID" value="NM_001300696.1"/>
</dbReference>
<dbReference type="RefSeq" id="NP_476761.3">
    <property type="nucleotide sequence ID" value="NM_057413.4"/>
</dbReference>
<dbReference type="PDB" id="1NDL">
    <property type="method" value="X-ray"/>
    <property type="resolution" value="2.40 A"/>
    <property type="chains" value="A/B/C=1-153"/>
</dbReference>
<dbReference type="PDB" id="1NSQ">
    <property type="method" value="X-ray"/>
    <property type="resolution" value="2.18 A"/>
    <property type="chains" value="A/B/C=1-153"/>
</dbReference>
<dbReference type="PDB" id="3WX8">
    <property type="method" value="X-ray"/>
    <property type="resolution" value="1.95 A"/>
    <property type="chains" value="A/B/C=1-153"/>
</dbReference>
<dbReference type="PDBsum" id="1NDL"/>
<dbReference type="PDBsum" id="1NSQ"/>
<dbReference type="PDBsum" id="3WX8"/>
<dbReference type="SMR" id="P08879"/>
<dbReference type="BioGRID" id="68580">
    <property type="interactions" value="120"/>
</dbReference>
<dbReference type="DIP" id="DIP-20572N"/>
<dbReference type="FunCoup" id="P08879">
    <property type="interactions" value="1472"/>
</dbReference>
<dbReference type="IntAct" id="P08879">
    <property type="interactions" value="189"/>
</dbReference>
<dbReference type="STRING" id="7227.FBpp0311978"/>
<dbReference type="iPTMnet" id="P08879"/>
<dbReference type="PaxDb" id="7227-FBpp0085223"/>
<dbReference type="DNASU" id="43739"/>
<dbReference type="EnsemblMetazoa" id="FBtr0346611">
    <property type="protein sequence ID" value="FBpp0312191"/>
    <property type="gene ID" value="FBgn0000150"/>
</dbReference>
<dbReference type="GeneID" id="43739"/>
<dbReference type="KEGG" id="dme:Dmel_CG2210"/>
<dbReference type="AGR" id="FB:FBgn0000150"/>
<dbReference type="CTD" id="43739"/>
<dbReference type="FlyBase" id="FBgn0000150">
    <property type="gene designation" value="awd"/>
</dbReference>
<dbReference type="VEuPathDB" id="VectorBase:FBgn0000150"/>
<dbReference type="eggNOG" id="KOG0888">
    <property type="taxonomic scope" value="Eukaryota"/>
</dbReference>
<dbReference type="GeneTree" id="ENSGT00940000164818"/>
<dbReference type="HOGENOM" id="CLU_060216_6_3_1"/>
<dbReference type="InParanoid" id="P08879"/>
<dbReference type="OrthoDB" id="2162449at2759"/>
<dbReference type="PhylomeDB" id="P08879"/>
<dbReference type="BRENDA" id="2.7.4.6">
    <property type="organism ID" value="1994"/>
</dbReference>
<dbReference type="Reactome" id="R-DME-499943">
    <property type="pathway name" value="Interconversion of nucleotide di- and triphosphates"/>
</dbReference>
<dbReference type="Reactome" id="R-DME-6798695">
    <property type="pathway name" value="Neutrophil degranulation"/>
</dbReference>
<dbReference type="Reactome" id="R-DME-9748787">
    <property type="pathway name" value="Azathioprine ADME"/>
</dbReference>
<dbReference type="Reactome" id="R-DME-9755088">
    <property type="pathway name" value="Ribavirin ADME"/>
</dbReference>
<dbReference type="BioGRID-ORCS" id="43739">
    <property type="hits" value="2 hits in 3 CRISPR screens"/>
</dbReference>
<dbReference type="ChiTaRS" id="awd">
    <property type="organism name" value="fly"/>
</dbReference>
<dbReference type="EvolutionaryTrace" id="P08879"/>
<dbReference type="GenomeRNAi" id="43739"/>
<dbReference type="PRO" id="PR:P08879"/>
<dbReference type="Proteomes" id="UP000000803">
    <property type="component" value="Chromosome 3R"/>
</dbReference>
<dbReference type="Bgee" id="FBgn0000150">
    <property type="expression patterns" value="Expressed in egg cell and 303 other cell types or tissues"/>
</dbReference>
<dbReference type="ExpressionAtlas" id="P08879">
    <property type="expression patterns" value="baseline and differential"/>
</dbReference>
<dbReference type="GO" id="GO:0005874">
    <property type="term" value="C:microtubule"/>
    <property type="evidence" value="ECO:0000314"/>
    <property type="project" value="FlyBase"/>
</dbReference>
<dbReference type="GO" id="GO:0005739">
    <property type="term" value="C:mitochondrion"/>
    <property type="evidence" value="ECO:0000250"/>
    <property type="project" value="FlyBase"/>
</dbReference>
<dbReference type="GO" id="GO:0005880">
    <property type="term" value="C:nuclear microtubule"/>
    <property type="evidence" value="ECO:0000315"/>
    <property type="project" value="UniProtKB"/>
</dbReference>
<dbReference type="GO" id="GO:0005886">
    <property type="term" value="C:plasma membrane"/>
    <property type="evidence" value="ECO:0007005"/>
    <property type="project" value="FlyBase"/>
</dbReference>
<dbReference type="GO" id="GO:0005524">
    <property type="term" value="F:ATP binding"/>
    <property type="evidence" value="ECO:0000314"/>
    <property type="project" value="UniProtKB"/>
</dbReference>
<dbReference type="GO" id="GO:0005525">
    <property type="term" value="F:GTP binding"/>
    <property type="evidence" value="ECO:0000314"/>
    <property type="project" value="FlyBase"/>
</dbReference>
<dbReference type="GO" id="GO:0016301">
    <property type="term" value="F:kinase activity"/>
    <property type="evidence" value="ECO:0000314"/>
    <property type="project" value="UniProtKB"/>
</dbReference>
<dbReference type="GO" id="GO:0000287">
    <property type="term" value="F:magnesium ion binding"/>
    <property type="evidence" value="ECO:0000314"/>
    <property type="project" value="UniProtKB"/>
</dbReference>
<dbReference type="GO" id="GO:0008017">
    <property type="term" value="F:microtubule binding"/>
    <property type="evidence" value="ECO:0000314"/>
    <property type="project" value="FlyBase"/>
</dbReference>
<dbReference type="GO" id="GO:0004550">
    <property type="term" value="F:nucleoside diphosphate kinase activity"/>
    <property type="evidence" value="ECO:0000314"/>
    <property type="project" value="UniProtKB"/>
</dbReference>
<dbReference type="GO" id="GO:0034332">
    <property type="term" value="P:adherens junction organization"/>
    <property type="evidence" value="ECO:0000315"/>
    <property type="project" value="FlyBase"/>
</dbReference>
<dbReference type="GO" id="GO:0006241">
    <property type="term" value="P:CTP biosynthetic process"/>
    <property type="evidence" value="ECO:0000304"/>
    <property type="project" value="UniProtKB"/>
</dbReference>
<dbReference type="GO" id="GO:0009202">
    <property type="term" value="P:deoxyribonucleoside triphosphate biosynthetic process"/>
    <property type="evidence" value="ECO:0000314"/>
    <property type="project" value="UniProtKB"/>
</dbReference>
<dbReference type="GO" id="GO:0007427">
    <property type="term" value="P:epithelial cell migration, open tracheal system"/>
    <property type="evidence" value="ECO:0000315"/>
    <property type="project" value="FlyBase"/>
</dbReference>
<dbReference type="GO" id="GO:0016334">
    <property type="term" value="P:establishment or maintenance of polarity of follicular epithelium"/>
    <property type="evidence" value="ECO:0000315"/>
    <property type="project" value="FlyBase"/>
</dbReference>
<dbReference type="GO" id="GO:0006183">
    <property type="term" value="P:GTP biosynthetic process"/>
    <property type="evidence" value="ECO:0000304"/>
    <property type="project" value="UniProtKB"/>
</dbReference>
<dbReference type="GO" id="GO:0007017">
    <property type="term" value="P:microtubule-based process"/>
    <property type="evidence" value="ECO:0000315"/>
    <property type="project" value="FlyBase"/>
</dbReference>
<dbReference type="GO" id="GO:0000278">
    <property type="term" value="P:mitotic cell cycle"/>
    <property type="evidence" value="ECO:0000315"/>
    <property type="project" value="FlyBase"/>
</dbReference>
<dbReference type="GO" id="GO:0009117">
    <property type="term" value="P:nucleotide metabolic process"/>
    <property type="evidence" value="ECO:0000304"/>
    <property type="project" value="UniProtKB"/>
</dbReference>
<dbReference type="GO" id="GO:0007424">
    <property type="term" value="P:open tracheal system development"/>
    <property type="evidence" value="ECO:0000315"/>
    <property type="project" value="FlyBase"/>
</dbReference>
<dbReference type="GO" id="GO:0035152">
    <property type="term" value="P:regulation of tube architecture, open tracheal system"/>
    <property type="evidence" value="ECO:0000315"/>
    <property type="project" value="FlyBase"/>
</dbReference>
<dbReference type="GO" id="GO:0009201">
    <property type="term" value="P:ribonucleoside triphosphate biosynthetic process"/>
    <property type="evidence" value="ECO:0000314"/>
    <property type="project" value="UniProtKB"/>
</dbReference>
<dbReference type="GO" id="GO:0006228">
    <property type="term" value="P:UTP biosynthetic process"/>
    <property type="evidence" value="ECO:0000304"/>
    <property type="project" value="UniProtKB"/>
</dbReference>
<dbReference type="CDD" id="cd04413">
    <property type="entry name" value="NDPk_I"/>
    <property type="match status" value="1"/>
</dbReference>
<dbReference type="FunFam" id="3.30.70.141:FF:000039">
    <property type="entry name" value="Nucleoside diphosphate kinase B"/>
    <property type="match status" value="1"/>
</dbReference>
<dbReference type="Gene3D" id="3.30.70.141">
    <property type="entry name" value="Nucleoside diphosphate kinase-like domain"/>
    <property type="match status" value="1"/>
</dbReference>
<dbReference type="HAMAP" id="MF_00451">
    <property type="entry name" value="NDP_kinase"/>
    <property type="match status" value="1"/>
</dbReference>
<dbReference type="InterPro" id="IPR034907">
    <property type="entry name" value="NDK-like_dom"/>
</dbReference>
<dbReference type="InterPro" id="IPR036850">
    <property type="entry name" value="NDK-like_dom_sf"/>
</dbReference>
<dbReference type="InterPro" id="IPR001564">
    <property type="entry name" value="Nucleoside_diP_kinase"/>
</dbReference>
<dbReference type="InterPro" id="IPR023005">
    <property type="entry name" value="Nucleoside_diP_kinase_AS"/>
</dbReference>
<dbReference type="NCBIfam" id="NF001908">
    <property type="entry name" value="PRK00668.1"/>
    <property type="match status" value="1"/>
</dbReference>
<dbReference type="PANTHER" id="PTHR11349">
    <property type="entry name" value="NUCLEOSIDE DIPHOSPHATE KINASE"/>
    <property type="match status" value="1"/>
</dbReference>
<dbReference type="Pfam" id="PF00334">
    <property type="entry name" value="NDK"/>
    <property type="match status" value="1"/>
</dbReference>
<dbReference type="PRINTS" id="PR01243">
    <property type="entry name" value="NUCDPKINASE"/>
</dbReference>
<dbReference type="SMART" id="SM00562">
    <property type="entry name" value="NDK"/>
    <property type="match status" value="1"/>
</dbReference>
<dbReference type="SUPFAM" id="SSF54919">
    <property type="entry name" value="Nucleoside diphosphate kinase, NDK"/>
    <property type="match status" value="1"/>
</dbReference>
<dbReference type="PROSITE" id="PS00469">
    <property type="entry name" value="NDPK"/>
    <property type="match status" value="1"/>
</dbReference>
<dbReference type="PROSITE" id="PS51374">
    <property type="entry name" value="NDPK_LIKE"/>
    <property type="match status" value="1"/>
</dbReference>
<sequence length="153" mass="17170">MAANKERTFIMVKPDGVQRGLVGKIIERFEQKGFKLVALKFTWASKELLEKHYADLSARPFFPGLVNYMNSGPVVPMVWEGLNVVKTGRQMLGATNPADSLPGTIRGDFCIQVGRNIIHGSDAVESAEKEIALWFNEKELVTWTPAAKDWIYE</sequence>
<gene>
    <name type="primary">awd</name>
    <name type="synonym">K-pn</name>
    <name type="ORF">CG2210</name>
</gene>
<keyword id="KW-0002">3D-structure</keyword>
<keyword id="KW-0007">Acetylation</keyword>
<keyword id="KW-0067">ATP-binding</keyword>
<keyword id="KW-0963">Cytoplasm</keyword>
<keyword id="KW-0206">Cytoskeleton</keyword>
<keyword id="KW-0903">Direct protein sequencing</keyword>
<keyword id="KW-0418">Kinase</keyword>
<keyword id="KW-0460">Magnesium</keyword>
<keyword id="KW-0479">Metal-binding</keyword>
<keyword id="KW-0493">Microtubule</keyword>
<keyword id="KW-0546">Nucleotide metabolism</keyword>
<keyword id="KW-0547">Nucleotide-binding</keyword>
<keyword id="KW-0597">Phosphoprotein</keyword>
<keyword id="KW-1185">Reference proteome</keyword>
<keyword id="KW-0808">Transferase</keyword>
<protein>
    <recommendedName>
        <fullName>Nucleoside diphosphate kinase</fullName>
        <shortName>NDK</shortName>
        <shortName>NDP kinase</shortName>
        <ecNumber>2.7.4.6</ecNumber>
    </recommendedName>
    <alternativeName>
        <fullName>Abnormal wing disks protein</fullName>
    </alternativeName>
    <alternativeName>
        <fullName>Killer of prune protein</fullName>
    </alternativeName>
</protein>
<name>NDKA_DROME</name>